<comment type="function">
    <text evidence="1">Involved in the third step of the chorismate pathway, which leads to the biosynthesis of aromatic amino acids. Catalyzes the cis-dehydration of 3-dehydroquinate (DHQ) and introduces the first double bond of the aromatic ring to yield 3-dehydroshikimate.</text>
</comment>
<comment type="catalytic activity">
    <reaction evidence="1">
        <text>3-dehydroquinate = 3-dehydroshikimate + H2O</text>
        <dbReference type="Rhea" id="RHEA:21096"/>
        <dbReference type="ChEBI" id="CHEBI:15377"/>
        <dbReference type="ChEBI" id="CHEBI:16630"/>
        <dbReference type="ChEBI" id="CHEBI:32364"/>
        <dbReference type="EC" id="4.2.1.10"/>
    </reaction>
</comment>
<comment type="pathway">
    <text evidence="1">Metabolic intermediate biosynthesis; chorismate biosynthesis; chorismate from D-erythrose 4-phosphate and phosphoenolpyruvate: step 3/7.</text>
</comment>
<comment type="subunit">
    <text evidence="1">Homodimer.</text>
</comment>
<comment type="similarity">
    <text evidence="1">Belongs to the type-I 3-dehydroquinase family.</text>
</comment>
<proteinExistence type="inferred from homology"/>
<organism>
    <name type="scientific">Thermoplasma acidophilum (strain ATCC 25905 / DSM 1728 / JCM 9062 / NBRC 15155 / AMRC-C165)</name>
    <dbReference type="NCBI Taxonomy" id="273075"/>
    <lineage>
        <taxon>Archaea</taxon>
        <taxon>Methanobacteriati</taxon>
        <taxon>Thermoplasmatota</taxon>
        <taxon>Thermoplasmata</taxon>
        <taxon>Thermoplasmatales</taxon>
        <taxon>Thermoplasmataceae</taxon>
        <taxon>Thermoplasma</taxon>
    </lineage>
</organism>
<reference key="1">
    <citation type="journal article" date="2000" name="Nature">
        <title>The genome sequence of the thermoacidophilic scavenger Thermoplasma acidophilum.</title>
        <authorList>
            <person name="Ruepp A."/>
            <person name="Graml W."/>
            <person name="Santos-Martinez M.-L."/>
            <person name="Koretke K.K."/>
            <person name="Volker C."/>
            <person name="Mewes H.-W."/>
            <person name="Frishman D."/>
            <person name="Stocker S."/>
            <person name="Lupas A.N."/>
            <person name="Baumeister W."/>
        </authorList>
    </citation>
    <scope>NUCLEOTIDE SEQUENCE [LARGE SCALE GENOMIC DNA]</scope>
    <source>
        <strain>ATCC 25905 / DSM 1728 / JCM 9062 / NBRC 15155 / AMRC-C165</strain>
    </source>
</reference>
<name>AROD_THEAC</name>
<keyword id="KW-0028">Amino-acid biosynthesis</keyword>
<keyword id="KW-0057">Aromatic amino acid biosynthesis</keyword>
<keyword id="KW-0456">Lyase</keyword>
<keyword id="KW-1185">Reference proteome</keyword>
<keyword id="KW-0704">Schiff base</keyword>
<evidence type="ECO:0000255" key="1">
    <source>
        <dbReference type="HAMAP-Rule" id="MF_00214"/>
    </source>
</evidence>
<protein>
    <recommendedName>
        <fullName evidence="1">3-dehydroquinate dehydratase</fullName>
        <shortName evidence="1">3-dehydroquinase</shortName>
        <ecNumber evidence="1">4.2.1.10</ecNumber>
    </recommendedName>
    <alternativeName>
        <fullName evidence="1">Type I DHQase</fullName>
    </alternativeName>
    <alternativeName>
        <fullName evidence="1">Type I dehydroquinase</fullName>
        <shortName evidence="1">DHQ1</shortName>
    </alternativeName>
</protein>
<feature type="chain" id="PRO_0000138840" description="3-dehydroquinate dehydratase">
    <location>
        <begin position="1"/>
        <end position="228"/>
    </location>
</feature>
<feature type="active site" description="Proton donor/acceptor" evidence="1">
    <location>
        <position position="127"/>
    </location>
</feature>
<feature type="active site" description="Schiff-base intermediate with substrate" evidence="1">
    <location>
        <position position="150"/>
    </location>
</feature>
<feature type="binding site" evidence="1">
    <location>
        <position position="26"/>
    </location>
    <ligand>
        <name>3-dehydroquinate</name>
        <dbReference type="ChEBI" id="CHEBI:32364"/>
    </ligand>
</feature>
<feature type="binding site" evidence="1">
    <location>
        <begin position="51"/>
        <end position="53"/>
    </location>
    <ligand>
        <name>3-dehydroquinate</name>
        <dbReference type="ChEBI" id="CHEBI:32364"/>
    </ligand>
</feature>
<feature type="binding site" evidence="1">
    <location>
        <position position="84"/>
    </location>
    <ligand>
        <name>3-dehydroquinate</name>
        <dbReference type="ChEBI" id="CHEBI:32364"/>
    </ligand>
</feature>
<feature type="binding site" evidence="1">
    <location>
        <position position="190"/>
    </location>
    <ligand>
        <name>3-dehydroquinate</name>
        <dbReference type="ChEBI" id="CHEBI:32364"/>
    </ligand>
</feature>
<feature type="binding site" evidence="1">
    <location>
        <position position="209"/>
    </location>
    <ligand>
        <name>3-dehydroquinate</name>
        <dbReference type="ChEBI" id="CHEBI:32364"/>
    </ligand>
</feature>
<feature type="binding site" evidence="1">
    <location>
        <position position="213"/>
    </location>
    <ligand>
        <name>3-dehydroquinate</name>
        <dbReference type="ChEBI" id="CHEBI:32364"/>
    </ligand>
</feature>
<dbReference type="EC" id="4.2.1.10" evidence="1"/>
<dbReference type="EMBL" id="AL445063">
    <property type="protein sequence ID" value="CAC11263.1"/>
    <property type="molecule type" value="Genomic_DNA"/>
</dbReference>
<dbReference type="RefSeq" id="WP_010900543.1">
    <property type="nucleotide sequence ID" value="NC_002578.1"/>
</dbReference>
<dbReference type="SMR" id="Q9HLV9"/>
<dbReference type="STRING" id="273075.gene:9571330"/>
<dbReference type="PaxDb" id="273075-Ta0116"/>
<dbReference type="EnsemblBacteria" id="CAC11263">
    <property type="protein sequence ID" value="CAC11263"/>
    <property type="gene ID" value="CAC11263"/>
</dbReference>
<dbReference type="KEGG" id="tac:Ta0116"/>
<dbReference type="eggNOG" id="arCOG02097">
    <property type="taxonomic scope" value="Archaea"/>
</dbReference>
<dbReference type="HOGENOM" id="CLU_1212642_0_0_2"/>
<dbReference type="InParanoid" id="Q9HLV9"/>
<dbReference type="OrthoDB" id="56320at2157"/>
<dbReference type="UniPathway" id="UPA00053">
    <property type="reaction ID" value="UER00086"/>
</dbReference>
<dbReference type="Proteomes" id="UP000001024">
    <property type="component" value="Chromosome"/>
</dbReference>
<dbReference type="GO" id="GO:0003855">
    <property type="term" value="F:3-dehydroquinate dehydratase activity"/>
    <property type="evidence" value="ECO:0007669"/>
    <property type="project" value="UniProtKB-UniRule"/>
</dbReference>
<dbReference type="GO" id="GO:0046279">
    <property type="term" value="P:3,4-dihydroxybenzoate biosynthetic process"/>
    <property type="evidence" value="ECO:0007669"/>
    <property type="project" value="UniProtKB-ARBA"/>
</dbReference>
<dbReference type="GO" id="GO:0008652">
    <property type="term" value="P:amino acid biosynthetic process"/>
    <property type="evidence" value="ECO:0007669"/>
    <property type="project" value="UniProtKB-KW"/>
</dbReference>
<dbReference type="GO" id="GO:0009073">
    <property type="term" value="P:aromatic amino acid family biosynthetic process"/>
    <property type="evidence" value="ECO:0007669"/>
    <property type="project" value="UniProtKB-KW"/>
</dbReference>
<dbReference type="GO" id="GO:0009423">
    <property type="term" value="P:chorismate biosynthetic process"/>
    <property type="evidence" value="ECO:0007669"/>
    <property type="project" value="UniProtKB-UniRule"/>
</dbReference>
<dbReference type="CDD" id="cd00502">
    <property type="entry name" value="DHQase_I"/>
    <property type="match status" value="1"/>
</dbReference>
<dbReference type="Gene3D" id="3.20.20.70">
    <property type="entry name" value="Aldolase class I"/>
    <property type="match status" value="1"/>
</dbReference>
<dbReference type="HAMAP" id="MF_00214">
    <property type="entry name" value="AroD"/>
    <property type="match status" value="1"/>
</dbReference>
<dbReference type="InterPro" id="IPR013785">
    <property type="entry name" value="Aldolase_TIM"/>
</dbReference>
<dbReference type="InterPro" id="IPR001381">
    <property type="entry name" value="DHquinase_I"/>
</dbReference>
<dbReference type="InterPro" id="IPR050146">
    <property type="entry name" value="Type-I_3-dehydroquinase"/>
</dbReference>
<dbReference type="NCBIfam" id="NF002321">
    <property type="entry name" value="PRK01261.1"/>
    <property type="match status" value="1"/>
</dbReference>
<dbReference type="PANTHER" id="PTHR43699">
    <property type="entry name" value="3-DEHYDROQUINATE DEHYDRATASE"/>
    <property type="match status" value="1"/>
</dbReference>
<dbReference type="PANTHER" id="PTHR43699:SF1">
    <property type="entry name" value="3-DEHYDROQUINATE DEHYDRATASE"/>
    <property type="match status" value="1"/>
</dbReference>
<dbReference type="Pfam" id="PF01487">
    <property type="entry name" value="DHquinase_I"/>
    <property type="match status" value="1"/>
</dbReference>
<dbReference type="SUPFAM" id="SSF51569">
    <property type="entry name" value="Aldolase"/>
    <property type="match status" value="1"/>
</dbReference>
<gene>
    <name evidence="1" type="primary">aroD</name>
    <name type="ordered locus">Ta0116</name>
</gene>
<accession>Q9HLV9</accession>
<sequence length="228" mass="26352">MPLYSGDKISIGKFVIGNPMPIVVTSVFYEDVSTFVERLQTKVLSDKNLYEIRFDMFTEREISDEEELISAMREMDIDYIFTYRGKDARKYYETAIRKMAPAVDIDMDLIGKLEAKPTVTKVIGSYHTSDSEAMMSALDRMIDSDVDMVKVACSYSEDQEFLGDLKRIIDIRKNRRKPIAYVPMGRTFWRALAGYYVSDIVYAMADRPTAYGQPPADYYYQAFKALFY</sequence>